<organism>
    <name type="scientific">Montanoa revealii</name>
    <dbReference type="NCBI Taxonomy" id="167004"/>
    <lineage>
        <taxon>Eukaryota</taxon>
        <taxon>Viridiplantae</taxon>
        <taxon>Streptophyta</taxon>
        <taxon>Embryophyta</taxon>
        <taxon>Tracheophyta</taxon>
        <taxon>Spermatophyta</taxon>
        <taxon>Magnoliopsida</taxon>
        <taxon>eudicotyledons</taxon>
        <taxon>Gunneridae</taxon>
        <taxon>Pentapetalae</taxon>
        <taxon>asterids</taxon>
        <taxon>campanulids</taxon>
        <taxon>Asterales</taxon>
        <taxon>Asteraceae</taxon>
        <taxon>Asteroideae</taxon>
        <taxon>Heliantheae alliance</taxon>
        <taxon>Heliantheae</taxon>
        <taxon>Montanoa</taxon>
    </lineage>
</organism>
<proteinExistence type="inferred from homology"/>
<reference key="1">
    <citation type="submission" date="2003-01" db="EMBL/GenBank/DDBJ databases">
        <title>Chloroplast DNA phylogeny of tribe Heliantheae (Asteraceae).</title>
        <authorList>
            <person name="Panero J.L."/>
            <person name="Baldwin B.G."/>
            <person name="Schilling E.E."/>
            <person name="Clevinger J.A."/>
        </authorList>
    </citation>
    <scope>NUCLEOTIDE SEQUENCE [GENOMIC DNA]</scope>
</reference>
<protein>
    <recommendedName>
        <fullName evidence="1">NAD(P)H-quinone oxidoreductase subunit I, chloroplastic</fullName>
        <ecNumber evidence="1">7.1.1.-</ecNumber>
    </recommendedName>
    <alternativeName>
        <fullName evidence="1">NAD(P)H dehydrogenase subunit I</fullName>
        <shortName evidence="1">NDH subunit I</shortName>
    </alternativeName>
    <alternativeName>
        <fullName evidence="1">NADH-plastoquinone oxidoreductase subunit I</fullName>
    </alternativeName>
</protein>
<keyword id="KW-0004">4Fe-4S</keyword>
<keyword id="KW-0150">Chloroplast</keyword>
<keyword id="KW-0408">Iron</keyword>
<keyword id="KW-0411">Iron-sulfur</keyword>
<keyword id="KW-0472">Membrane</keyword>
<keyword id="KW-0479">Metal-binding</keyword>
<keyword id="KW-0520">NAD</keyword>
<keyword id="KW-0521">NADP</keyword>
<keyword id="KW-0934">Plastid</keyword>
<keyword id="KW-0618">Plastoquinone</keyword>
<keyword id="KW-0874">Quinone</keyword>
<keyword id="KW-0677">Repeat</keyword>
<keyword id="KW-0793">Thylakoid</keyword>
<keyword id="KW-1278">Translocase</keyword>
<comment type="function">
    <text evidence="1">NDH shuttles electrons from NAD(P)H:plastoquinone, via FMN and iron-sulfur (Fe-S) centers, to quinones in the photosynthetic chain and possibly in a chloroplast respiratory chain. The immediate electron acceptor for the enzyme in this species is believed to be plastoquinone. Couples the redox reaction to proton translocation, and thus conserves the redox energy in a proton gradient.</text>
</comment>
<comment type="catalytic activity">
    <reaction evidence="1">
        <text>a plastoquinone + NADH + (n+1) H(+)(in) = a plastoquinol + NAD(+) + n H(+)(out)</text>
        <dbReference type="Rhea" id="RHEA:42608"/>
        <dbReference type="Rhea" id="RHEA-COMP:9561"/>
        <dbReference type="Rhea" id="RHEA-COMP:9562"/>
        <dbReference type="ChEBI" id="CHEBI:15378"/>
        <dbReference type="ChEBI" id="CHEBI:17757"/>
        <dbReference type="ChEBI" id="CHEBI:57540"/>
        <dbReference type="ChEBI" id="CHEBI:57945"/>
        <dbReference type="ChEBI" id="CHEBI:62192"/>
    </reaction>
</comment>
<comment type="catalytic activity">
    <reaction evidence="1">
        <text>a plastoquinone + NADPH + (n+1) H(+)(in) = a plastoquinol + NADP(+) + n H(+)(out)</text>
        <dbReference type="Rhea" id="RHEA:42612"/>
        <dbReference type="Rhea" id="RHEA-COMP:9561"/>
        <dbReference type="Rhea" id="RHEA-COMP:9562"/>
        <dbReference type="ChEBI" id="CHEBI:15378"/>
        <dbReference type="ChEBI" id="CHEBI:17757"/>
        <dbReference type="ChEBI" id="CHEBI:57783"/>
        <dbReference type="ChEBI" id="CHEBI:58349"/>
        <dbReference type="ChEBI" id="CHEBI:62192"/>
    </reaction>
</comment>
<comment type="cofactor">
    <cofactor evidence="1">
        <name>[4Fe-4S] cluster</name>
        <dbReference type="ChEBI" id="CHEBI:49883"/>
    </cofactor>
    <text evidence="1">Binds 2 [4Fe-4S] clusters per subunit.</text>
</comment>
<comment type="subunit">
    <text evidence="1">NDH is composed of at least 16 different subunits, 5 of which are encoded in the nucleus.</text>
</comment>
<comment type="subcellular location">
    <subcellularLocation>
        <location evidence="1">Plastid</location>
        <location evidence="1">Chloroplast thylakoid membrane</location>
        <topology evidence="1">Peripheral membrane protein</topology>
    </subcellularLocation>
</comment>
<comment type="similarity">
    <text evidence="1">Belongs to the complex I 23 kDa subunit family.</text>
</comment>
<dbReference type="EC" id="7.1.1.-" evidence="1"/>
<dbReference type="EMBL" id="AF383822">
    <property type="protein sequence ID" value="AAN61763.1"/>
    <property type="molecule type" value="Genomic_DNA"/>
</dbReference>
<dbReference type="SMR" id="Q8HVP1"/>
<dbReference type="GO" id="GO:0009535">
    <property type="term" value="C:chloroplast thylakoid membrane"/>
    <property type="evidence" value="ECO:0007669"/>
    <property type="project" value="UniProtKB-SubCell"/>
</dbReference>
<dbReference type="GO" id="GO:0051539">
    <property type="term" value="F:4 iron, 4 sulfur cluster binding"/>
    <property type="evidence" value="ECO:0007669"/>
    <property type="project" value="UniProtKB-KW"/>
</dbReference>
<dbReference type="GO" id="GO:0005506">
    <property type="term" value="F:iron ion binding"/>
    <property type="evidence" value="ECO:0007669"/>
    <property type="project" value="UniProtKB-UniRule"/>
</dbReference>
<dbReference type="GO" id="GO:0008137">
    <property type="term" value="F:NADH dehydrogenase (ubiquinone) activity"/>
    <property type="evidence" value="ECO:0007669"/>
    <property type="project" value="InterPro"/>
</dbReference>
<dbReference type="GO" id="GO:0048038">
    <property type="term" value="F:quinone binding"/>
    <property type="evidence" value="ECO:0007669"/>
    <property type="project" value="UniProtKB-KW"/>
</dbReference>
<dbReference type="GO" id="GO:0019684">
    <property type="term" value="P:photosynthesis, light reaction"/>
    <property type="evidence" value="ECO:0007669"/>
    <property type="project" value="UniProtKB-UniRule"/>
</dbReference>
<dbReference type="FunFam" id="3.30.70.3270:FF:000006">
    <property type="entry name" value="NAD(P)H-quinone oxidoreductase subunit I, chloroplastic"/>
    <property type="match status" value="1"/>
</dbReference>
<dbReference type="Gene3D" id="3.30.70.3270">
    <property type="match status" value="1"/>
</dbReference>
<dbReference type="HAMAP" id="MF_01351">
    <property type="entry name" value="NDH1_NuoI"/>
    <property type="match status" value="1"/>
</dbReference>
<dbReference type="InterPro" id="IPR017896">
    <property type="entry name" value="4Fe4S_Fe-S-bd"/>
</dbReference>
<dbReference type="InterPro" id="IPR017900">
    <property type="entry name" value="4Fe4S_Fe_S_CS"/>
</dbReference>
<dbReference type="InterPro" id="IPR010226">
    <property type="entry name" value="NADH_quinone_OxRdtase_chainI"/>
</dbReference>
<dbReference type="InterPro" id="IPR004497">
    <property type="entry name" value="NDHI"/>
</dbReference>
<dbReference type="NCBIfam" id="TIGR00403">
    <property type="entry name" value="ndhI"/>
    <property type="match status" value="1"/>
</dbReference>
<dbReference type="NCBIfam" id="TIGR01971">
    <property type="entry name" value="NuoI"/>
    <property type="match status" value="1"/>
</dbReference>
<dbReference type="NCBIfam" id="NF004537">
    <property type="entry name" value="PRK05888.1-3"/>
    <property type="match status" value="1"/>
</dbReference>
<dbReference type="PANTHER" id="PTHR47275">
    <property type="entry name" value="NAD(P)H-QUINONE OXIDOREDUCTASE SUBUNIT I, CHLOROPLASTIC"/>
    <property type="match status" value="1"/>
</dbReference>
<dbReference type="PANTHER" id="PTHR47275:SF1">
    <property type="entry name" value="NAD(P)H-QUINONE OXIDOREDUCTASE SUBUNIT I, CHLOROPLASTIC"/>
    <property type="match status" value="1"/>
</dbReference>
<dbReference type="Pfam" id="PF00037">
    <property type="entry name" value="Fer4"/>
    <property type="match status" value="2"/>
</dbReference>
<dbReference type="SUPFAM" id="SSF54862">
    <property type="entry name" value="4Fe-4S ferredoxins"/>
    <property type="match status" value="1"/>
</dbReference>
<dbReference type="PROSITE" id="PS00198">
    <property type="entry name" value="4FE4S_FER_1"/>
    <property type="match status" value="2"/>
</dbReference>
<dbReference type="PROSITE" id="PS51379">
    <property type="entry name" value="4FE4S_FER_2"/>
    <property type="match status" value="2"/>
</dbReference>
<name>NDHI_MONRV</name>
<sequence length="166" mass="19475">MFPMVTEFMNYGQQTVRAARYIGQGFMITLSHANRLPVTIQYPYEKLITSERFRGRIHFEFDKCIACEVCVRVCPIDLPVVDWKLETDIRKKRLLNYSIDFGICIFCGNCVEYCPTNCLSMTEEYELSTYDRHELNYNQIALGRLPMSIIDDYTIRTILNLPEIKT</sequence>
<evidence type="ECO:0000255" key="1">
    <source>
        <dbReference type="HAMAP-Rule" id="MF_01351"/>
    </source>
</evidence>
<accession>Q8HVP1</accession>
<feature type="chain" id="PRO_0000250821" description="NAD(P)H-quinone oxidoreductase subunit I, chloroplastic">
    <location>
        <begin position="1"/>
        <end position="166"/>
    </location>
</feature>
<feature type="domain" description="4Fe-4S ferredoxin-type 1" evidence="1">
    <location>
        <begin position="55"/>
        <end position="84"/>
    </location>
</feature>
<feature type="domain" description="4Fe-4S ferredoxin-type 2" evidence="1">
    <location>
        <begin position="95"/>
        <end position="124"/>
    </location>
</feature>
<feature type="binding site" evidence="1">
    <location>
        <position position="64"/>
    </location>
    <ligand>
        <name>[4Fe-4S] cluster</name>
        <dbReference type="ChEBI" id="CHEBI:49883"/>
        <label>1</label>
    </ligand>
</feature>
<feature type="binding site" evidence="1">
    <location>
        <position position="67"/>
    </location>
    <ligand>
        <name>[4Fe-4S] cluster</name>
        <dbReference type="ChEBI" id="CHEBI:49883"/>
        <label>1</label>
    </ligand>
</feature>
<feature type="binding site" evidence="1">
    <location>
        <position position="70"/>
    </location>
    <ligand>
        <name>[4Fe-4S] cluster</name>
        <dbReference type="ChEBI" id="CHEBI:49883"/>
        <label>1</label>
    </ligand>
</feature>
<feature type="binding site" evidence="1">
    <location>
        <position position="74"/>
    </location>
    <ligand>
        <name>[4Fe-4S] cluster</name>
        <dbReference type="ChEBI" id="CHEBI:49883"/>
        <label>2</label>
    </ligand>
</feature>
<feature type="binding site" evidence="1">
    <location>
        <position position="104"/>
    </location>
    <ligand>
        <name>[4Fe-4S] cluster</name>
        <dbReference type="ChEBI" id="CHEBI:49883"/>
        <label>2</label>
    </ligand>
</feature>
<feature type="binding site" evidence="1">
    <location>
        <position position="107"/>
    </location>
    <ligand>
        <name>[4Fe-4S] cluster</name>
        <dbReference type="ChEBI" id="CHEBI:49883"/>
        <label>2</label>
    </ligand>
</feature>
<feature type="binding site" evidence="1">
    <location>
        <position position="110"/>
    </location>
    <ligand>
        <name>[4Fe-4S] cluster</name>
        <dbReference type="ChEBI" id="CHEBI:49883"/>
        <label>2</label>
    </ligand>
</feature>
<feature type="binding site" evidence="1">
    <location>
        <position position="114"/>
    </location>
    <ligand>
        <name>[4Fe-4S] cluster</name>
        <dbReference type="ChEBI" id="CHEBI:49883"/>
        <label>1</label>
    </ligand>
</feature>
<geneLocation type="chloroplast"/>
<gene>
    <name evidence="1" type="primary">ndhI</name>
</gene>